<keyword id="KW-0004">4Fe-4S</keyword>
<keyword id="KW-0028">Amino-acid biosynthesis</keyword>
<keyword id="KW-0100">Branched-chain amino acid biosynthesis</keyword>
<keyword id="KW-0408">Iron</keyword>
<keyword id="KW-0411">Iron-sulfur</keyword>
<keyword id="KW-0432">Leucine biosynthesis</keyword>
<keyword id="KW-0456">Lyase</keyword>
<keyword id="KW-0479">Metal-binding</keyword>
<name>LEUC_CORGB</name>
<protein>
    <recommendedName>
        <fullName evidence="1">3-isopropylmalate dehydratase large subunit</fullName>
        <ecNumber evidence="1">4.2.1.33</ecNumber>
    </recommendedName>
    <alternativeName>
        <fullName evidence="1">Alpha-IPM isomerase</fullName>
        <shortName evidence="1">IPMI</shortName>
    </alternativeName>
    <alternativeName>
        <fullName evidence="1">Isopropylmalate isomerase</fullName>
    </alternativeName>
</protein>
<proteinExistence type="inferred from homology"/>
<comment type="function">
    <text evidence="1">Catalyzes the isomerization between 2-isopropylmalate and 3-isopropylmalate, via the formation of 2-isopropylmaleate.</text>
</comment>
<comment type="catalytic activity">
    <reaction evidence="1">
        <text>(2R,3S)-3-isopropylmalate = (2S)-2-isopropylmalate</text>
        <dbReference type="Rhea" id="RHEA:32287"/>
        <dbReference type="ChEBI" id="CHEBI:1178"/>
        <dbReference type="ChEBI" id="CHEBI:35121"/>
        <dbReference type="EC" id="4.2.1.33"/>
    </reaction>
</comment>
<comment type="cofactor">
    <cofactor evidence="1">
        <name>[4Fe-4S] cluster</name>
        <dbReference type="ChEBI" id="CHEBI:49883"/>
    </cofactor>
    <text evidence="1">Binds 1 [4Fe-4S] cluster per subunit.</text>
</comment>
<comment type="pathway">
    <text evidence="1">Amino-acid biosynthesis; L-leucine biosynthesis; L-leucine from 3-methyl-2-oxobutanoate: step 2/4.</text>
</comment>
<comment type="subunit">
    <text evidence="1">Heterodimer of LeuC and LeuD.</text>
</comment>
<comment type="similarity">
    <text evidence="1">Belongs to the aconitase/IPM isomerase family. LeuC type 1 subfamily.</text>
</comment>
<sequence length="481" mass="51715">MTSPVENSTSTEKLTLAEKVWRDHVVSKGENGEPDLLYIDLQLLHEVTSPQAFDGLRMTGRKLRHPELHLATEDHNVPTEGIKTGSLLEINDQISRLQVSTLRDNCEEFGVRLHPMGDVRQGIVHTVGPQLGATQPGMTIVCGDSHTSXHGAFGSMAFGIGTSEVEHVMATQTLPLKPFKTMAIEVTGELQPGVSSKDLILAIIAKIGTGGGQGYVLEYRGEAIRKMSMDARMTMCNMSIEAGARAGMIAPDQTTFDYVEGREMAPKGADWDEAVAYWKTLPTDEGATFDKVVEIDGSALTPFITWGTNPGQGLPLGESVPSPEDFTNDNDKAAAEKALQYMDLVPGTPLRDIKIDTVFLGSCTNARIEDLQIAADILKGHKIADGMRMMVVPSSTWIKQEAEALGLDKIFTDAGAEWRTAGCSMCLGMNPDQLKPGERSASTSNRNFEGRQGPGGRTHLVSPAVAAATAIRGTLSSPADL</sequence>
<dbReference type="EC" id="4.2.1.33" evidence="1"/>
<dbReference type="EMBL" id="AP009044">
    <property type="protein sequence ID" value="BAF54375.1"/>
    <property type="molecule type" value="Genomic_DNA"/>
</dbReference>
<dbReference type="RefSeq" id="WP_011897162.1">
    <property type="nucleotide sequence ID" value="NC_009342.1"/>
</dbReference>
<dbReference type="KEGG" id="cgt:cgR_1390"/>
<dbReference type="HOGENOM" id="CLU_006714_3_4_11"/>
<dbReference type="PhylomeDB" id="A4QDS8"/>
<dbReference type="UniPathway" id="UPA00048">
    <property type="reaction ID" value="UER00071"/>
</dbReference>
<dbReference type="Proteomes" id="UP000006698">
    <property type="component" value="Chromosome"/>
</dbReference>
<dbReference type="GO" id="GO:0003861">
    <property type="term" value="F:3-isopropylmalate dehydratase activity"/>
    <property type="evidence" value="ECO:0007669"/>
    <property type="project" value="UniProtKB-UniRule"/>
</dbReference>
<dbReference type="GO" id="GO:0051539">
    <property type="term" value="F:4 iron, 4 sulfur cluster binding"/>
    <property type="evidence" value="ECO:0007669"/>
    <property type="project" value="UniProtKB-KW"/>
</dbReference>
<dbReference type="GO" id="GO:0046872">
    <property type="term" value="F:metal ion binding"/>
    <property type="evidence" value="ECO:0007669"/>
    <property type="project" value="UniProtKB-KW"/>
</dbReference>
<dbReference type="GO" id="GO:0009098">
    <property type="term" value="P:L-leucine biosynthetic process"/>
    <property type="evidence" value="ECO:0007669"/>
    <property type="project" value="UniProtKB-UniRule"/>
</dbReference>
<dbReference type="CDD" id="cd01583">
    <property type="entry name" value="IPMI"/>
    <property type="match status" value="1"/>
</dbReference>
<dbReference type="FunFam" id="3.30.499.10:FF:000007">
    <property type="entry name" value="3-isopropylmalate dehydratase large subunit"/>
    <property type="match status" value="1"/>
</dbReference>
<dbReference type="Gene3D" id="3.30.499.10">
    <property type="entry name" value="Aconitase, domain 3"/>
    <property type="match status" value="2"/>
</dbReference>
<dbReference type="HAMAP" id="MF_01026">
    <property type="entry name" value="LeuC_type1"/>
    <property type="match status" value="1"/>
</dbReference>
<dbReference type="InterPro" id="IPR004430">
    <property type="entry name" value="3-IsopropMal_deHydase_lsu"/>
</dbReference>
<dbReference type="InterPro" id="IPR015931">
    <property type="entry name" value="Acnase/IPM_dHydase_lsu_aba_1/3"/>
</dbReference>
<dbReference type="InterPro" id="IPR001030">
    <property type="entry name" value="Acoase/IPM_deHydtase_lsu_aba"/>
</dbReference>
<dbReference type="InterPro" id="IPR018136">
    <property type="entry name" value="Aconitase_4Fe-4S_BS"/>
</dbReference>
<dbReference type="InterPro" id="IPR036008">
    <property type="entry name" value="Aconitase_4Fe-4S_dom"/>
</dbReference>
<dbReference type="InterPro" id="IPR050067">
    <property type="entry name" value="IPM_dehydratase_rel_enz"/>
</dbReference>
<dbReference type="InterPro" id="IPR033941">
    <property type="entry name" value="IPMI_cat"/>
</dbReference>
<dbReference type="NCBIfam" id="TIGR00170">
    <property type="entry name" value="leuC"/>
    <property type="match status" value="1"/>
</dbReference>
<dbReference type="NCBIfam" id="NF004016">
    <property type="entry name" value="PRK05478.1"/>
    <property type="match status" value="1"/>
</dbReference>
<dbReference type="NCBIfam" id="NF009116">
    <property type="entry name" value="PRK12466.1"/>
    <property type="match status" value="1"/>
</dbReference>
<dbReference type="PANTHER" id="PTHR43822:SF9">
    <property type="entry name" value="3-ISOPROPYLMALATE DEHYDRATASE"/>
    <property type="match status" value="1"/>
</dbReference>
<dbReference type="PANTHER" id="PTHR43822">
    <property type="entry name" value="HOMOACONITASE, MITOCHONDRIAL-RELATED"/>
    <property type="match status" value="1"/>
</dbReference>
<dbReference type="Pfam" id="PF00330">
    <property type="entry name" value="Aconitase"/>
    <property type="match status" value="1"/>
</dbReference>
<dbReference type="PRINTS" id="PR00415">
    <property type="entry name" value="ACONITASE"/>
</dbReference>
<dbReference type="SUPFAM" id="SSF53732">
    <property type="entry name" value="Aconitase iron-sulfur domain"/>
    <property type="match status" value="1"/>
</dbReference>
<dbReference type="PROSITE" id="PS00450">
    <property type="entry name" value="ACONITASE_1"/>
    <property type="match status" value="1"/>
</dbReference>
<dbReference type="PROSITE" id="PS01244">
    <property type="entry name" value="ACONITASE_2"/>
    <property type="match status" value="1"/>
</dbReference>
<reference key="1">
    <citation type="journal article" date="2007" name="Microbiology">
        <title>Comparative analysis of the Corynebacterium glutamicum group and complete genome sequence of strain R.</title>
        <authorList>
            <person name="Yukawa H."/>
            <person name="Omumasaba C.A."/>
            <person name="Nonaka H."/>
            <person name="Kos P."/>
            <person name="Okai N."/>
            <person name="Suzuki N."/>
            <person name="Suda M."/>
            <person name="Tsuge Y."/>
            <person name="Watanabe J."/>
            <person name="Ikeda Y."/>
            <person name="Vertes A.A."/>
            <person name="Inui M."/>
        </authorList>
    </citation>
    <scope>NUCLEOTIDE SEQUENCE [LARGE SCALE GENOMIC DNA]</scope>
    <source>
        <strain>R</strain>
    </source>
</reference>
<accession>A4QDS8</accession>
<gene>
    <name evidence="1" type="primary">leuC</name>
    <name type="ordered locus">cgR_1390</name>
</gene>
<organism>
    <name type="scientific">Corynebacterium glutamicum (strain R)</name>
    <dbReference type="NCBI Taxonomy" id="340322"/>
    <lineage>
        <taxon>Bacteria</taxon>
        <taxon>Bacillati</taxon>
        <taxon>Actinomycetota</taxon>
        <taxon>Actinomycetes</taxon>
        <taxon>Mycobacteriales</taxon>
        <taxon>Corynebacteriaceae</taxon>
        <taxon>Corynebacterium</taxon>
    </lineage>
</organism>
<feature type="chain" id="PRO_1000063547" description="3-isopropylmalate dehydratase large subunit">
    <location>
        <begin position="1"/>
        <end position="481"/>
    </location>
</feature>
<feature type="region of interest" description="Disordered" evidence="2">
    <location>
        <begin position="432"/>
        <end position="459"/>
    </location>
</feature>
<feature type="binding site" evidence="1">
    <location>
        <position position="363"/>
    </location>
    <ligand>
        <name>[4Fe-4S] cluster</name>
        <dbReference type="ChEBI" id="CHEBI:49883"/>
    </ligand>
</feature>
<feature type="binding site" evidence="1">
    <location>
        <position position="423"/>
    </location>
    <ligand>
        <name>[4Fe-4S] cluster</name>
        <dbReference type="ChEBI" id="CHEBI:49883"/>
    </ligand>
</feature>
<feature type="binding site" evidence="1">
    <location>
        <position position="426"/>
    </location>
    <ligand>
        <name>[4Fe-4S] cluster</name>
        <dbReference type="ChEBI" id="CHEBI:49883"/>
    </ligand>
</feature>
<evidence type="ECO:0000255" key="1">
    <source>
        <dbReference type="HAMAP-Rule" id="MF_01026"/>
    </source>
</evidence>
<evidence type="ECO:0000256" key="2">
    <source>
        <dbReference type="SAM" id="MobiDB-lite"/>
    </source>
</evidence>